<proteinExistence type="evidence at transcript level"/>
<gene>
    <name type="primary">Slc10a3</name>
    <name type="synonym">P3</name>
</gene>
<organism>
    <name type="scientific">Mus musculus</name>
    <name type="common">Mouse</name>
    <dbReference type="NCBI Taxonomy" id="10090"/>
    <lineage>
        <taxon>Eukaryota</taxon>
        <taxon>Metazoa</taxon>
        <taxon>Chordata</taxon>
        <taxon>Craniata</taxon>
        <taxon>Vertebrata</taxon>
        <taxon>Euteleostomi</taxon>
        <taxon>Mammalia</taxon>
        <taxon>Eutheria</taxon>
        <taxon>Euarchontoglires</taxon>
        <taxon>Glires</taxon>
        <taxon>Rodentia</taxon>
        <taxon>Myomorpha</taxon>
        <taxon>Muroidea</taxon>
        <taxon>Muridae</taxon>
        <taxon>Murinae</taxon>
        <taxon>Mus</taxon>
        <taxon>Mus</taxon>
    </lineage>
</organism>
<accession>P21129</accession>
<accession>Q8QZR2</accession>
<comment type="function">
    <text>The ubiquitous expression and the conservation of the sequence in distant animal species suggest that the gene codes for a protein with housekeeping functions.</text>
</comment>
<comment type="subcellular location">
    <subcellularLocation>
        <location evidence="2">Membrane</location>
        <topology evidence="2">Multi-pass membrane protein</topology>
    </subcellularLocation>
</comment>
<comment type="similarity">
    <text evidence="2">Belongs to the bile acid:sodium symporter (BASS) (TC 2.A.28) family.</text>
</comment>
<keyword id="KW-0472">Membrane</keyword>
<keyword id="KW-1185">Reference proteome</keyword>
<keyword id="KW-0769">Symport</keyword>
<keyword id="KW-0812">Transmembrane</keyword>
<keyword id="KW-1133">Transmembrane helix</keyword>
<keyword id="KW-0813">Transport</keyword>
<protein>
    <recommendedName>
        <fullName>P3 protein</fullName>
    </recommendedName>
    <alternativeName>
        <fullName>Solute carrier family 10 member 3</fullName>
    </alternativeName>
</protein>
<feature type="chain" id="PRO_0000052344" description="P3 protein">
    <location>
        <begin position="1"/>
        <end position="473"/>
    </location>
</feature>
<feature type="transmembrane region" description="Helical" evidence="1">
    <location>
        <begin position="25"/>
        <end position="45"/>
    </location>
</feature>
<feature type="transmembrane region" description="Helical" evidence="1">
    <location>
        <begin position="221"/>
        <end position="241"/>
    </location>
</feature>
<feature type="transmembrane region" description="Helical" evidence="1">
    <location>
        <begin position="249"/>
        <end position="269"/>
    </location>
</feature>
<feature type="transmembrane region" description="Helical" evidence="1">
    <location>
        <begin position="277"/>
        <end position="297"/>
    </location>
</feature>
<feature type="transmembrane region" description="Helical" evidence="1">
    <location>
        <begin position="316"/>
        <end position="336"/>
    </location>
</feature>
<feature type="transmembrane region" description="Helical" evidence="1">
    <location>
        <begin position="356"/>
        <end position="376"/>
    </location>
</feature>
<feature type="transmembrane region" description="Helical" evidence="1">
    <location>
        <begin position="381"/>
        <end position="401"/>
    </location>
</feature>
<feature type="transmembrane region" description="Helical" evidence="1">
    <location>
        <begin position="413"/>
        <end position="433"/>
    </location>
</feature>
<feature type="transmembrane region" description="Helical" evidence="1">
    <location>
        <begin position="446"/>
        <end position="466"/>
    </location>
</feature>
<sequence>MVVKKSRGSSQQLPGLGGQGGCTGFVGMLGTALLFISLPWGAQVMASANISTALGHTSGHYLSIGDGSVTEFDFPEKSEGIIVISSQYTGQTNGTGPSPILKVISLDTEVLTIKNVSAITWSSGGGFVVGIHSGLAGLAPLHLQLMDFYEAPPLLIEERRDFCIRVSPAEDLPSALNTNLGHFSENPILYLLLPLIFVNKCSFGCKVELEVLKELLQSPQPMLLGLLGQFLVMPFYAFLMAKVFMLPKALALGLIITCSSPGGGGSYLFSLLLGGDVTLAISMTFISTVAATGFLPLSSAIYSYLLSIHETLHVPISKILGTLLFIAIPIAAGVVIKSKLPKFSELLLQVIKPFSFILLLGGLFLAYHMGVFILVGVRLPIVLVGFTVPLVGLLVGYSLAICLKLPVAQRRTVSIEVGVQNSLLALAMLQLSLRRLQADYASQAPFIVALSGTSEMLALVIGQFIYSILFPVP</sequence>
<name>P3_MOUSE</name>
<reference key="1">
    <citation type="journal article" date="2005" name="Science">
        <title>The transcriptional landscape of the mammalian genome.</title>
        <authorList>
            <person name="Carninci P."/>
            <person name="Kasukawa T."/>
            <person name="Katayama S."/>
            <person name="Gough J."/>
            <person name="Frith M.C."/>
            <person name="Maeda N."/>
            <person name="Oyama R."/>
            <person name="Ravasi T."/>
            <person name="Lenhard B."/>
            <person name="Wells C."/>
            <person name="Kodzius R."/>
            <person name="Shimokawa K."/>
            <person name="Bajic V.B."/>
            <person name="Brenner S.E."/>
            <person name="Batalov S."/>
            <person name="Forrest A.R."/>
            <person name="Zavolan M."/>
            <person name="Davis M.J."/>
            <person name="Wilming L.G."/>
            <person name="Aidinis V."/>
            <person name="Allen J.E."/>
            <person name="Ambesi-Impiombato A."/>
            <person name="Apweiler R."/>
            <person name="Aturaliya R.N."/>
            <person name="Bailey T.L."/>
            <person name="Bansal M."/>
            <person name="Baxter L."/>
            <person name="Beisel K.W."/>
            <person name="Bersano T."/>
            <person name="Bono H."/>
            <person name="Chalk A.M."/>
            <person name="Chiu K.P."/>
            <person name="Choudhary V."/>
            <person name="Christoffels A."/>
            <person name="Clutterbuck D.R."/>
            <person name="Crowe M.L."/>
            <person name="Dalla E."/>
            <person name="Dalrymple B.P."/>
            <person name="de Bono B."/>
            <person name="Della Gatta G."/>
            <person name="di Bernardo D."/>
            <person name="Down T."/>
            <person name="Engstrom P."/>
            <person name="Fagiolini M."/>
            <person name="Faulkner G."/>
            <person name="Fletcher C.F."/>
            <person name="Fukushima T."/>
            <person name="Furuno M."/>
            <person name="Futaki S."/>
            <person name="Gariboldi M."/>
            <person name="Georgii-Hemming P."/>
            <person name="Gingeras T.R."/>
            <person name="Gojobori T."/>
            <person name="Green R.E."/>
            <person name="Gustincich S."/>
            <person name="Harbers M."/>
            <person name="Hayashi Y."/>
            <person name="Hensch T.K."/>
            <person name="Hirokawa N."/>
            <person name="Hill D."/>
            <person name="Huminiecki L."/>
            <person name="Iacono M."/>
            <person name="Ikeo K."/>
            <person name="Iwama A."/>
            <person name="Ishikawa T."/>
            <person name="Jakt M."/>
            <person name="Kanapin A."/>
            <person name="Katoh M."/>
            <person name="Kawasawa Y."/>
            <person name="Kelso J."/>
            <person name="Kitamura H."/>
            <person name="Kitano H."/>
            <person name="Kollias G."/>
            <person name="Krishnan S.P."/>
            <person name="Kruger A."/>
            <person name="Kummerfeld S.K."/>
            <person name="Kurochkin I.V."/>
            <person name="Lareau L.F."/>
            <person name="Lazarevic D."/>
            <person name="Lipovich L."/>
            <person name="Liu J."/>
            <person name="Liuni S."/>
            <person name="McWilliam S."/>
            <person name="Madan Babu M."/>
            <person name="Madera M."/>
            <person name="Marchionni L."/>
            <person name="Matsuda H."/>
            <person name="Matsuzawa S."/>
            <person name="Miki H."/>
            <person name="Mignone F."/>
            <person name="Miyake S."/>
            <person name="Morris K."/>
            <person name="Mottagui-Tabar S."/>
            <person name="Mulder N."/>
            <person name="Nakano N."/>
            <person name="Nakauchi H."/>
            <person name="Ng P."/>
            <person name="Nilsson R."/>
            <person name="Nishiguchi S."/>
            <person name="Nishikawa S."/>
            <person name="Nori F."/>
            <person name="Ohara O."/>
            <person name="Okazaki Y."/>
            <person name="Orlando V."/>
            <person name="Pang K.C."/>
            <person name="Pavan W.J."/>
            <person name="Pavesi G."/>
            <person name="Pesole G."/>
            <person name="Petrovsky N."/>
            <person name="Piazza S."/>
            <person name="Reed J."/>
            <person name="Reid J.F."/>
            <person name="Ring B.Z."/>
            <person name="Ringwald M."/>
            <person name="Rost B."/>
            <person name="Ruan Y."/>
            <person name="Salzberg S.L."/>
            <person name="Sandelin A."/>
            <person name="Schneider C."/>
            <person name="Schoenbach C."/>
            <person name="Sekiguchi K."/>
            <person name="Semple C.A."/>
            <person name="Seno S."/>
            <person name="Sessa L."/>
            <person name="Sheng Y."/>
            <person name="Shibata Y."/>
            <person name="Shimada H."/>
            <person name="Shimada K."/>
            <person name="Silva D."/>
            <person name="Sinclair B."/>
            <person name="Sperling S."/>
            <person name="Stupka E."/>
            <person name="Sugiura K."/>
            <person name="Sultana R."/>
            <person name="Takenaka Y."/>
            <person name="Taki K."/>
            <person name="Tammoja K."/>
            <person name="Tan S.L."/>
            <person name="Tang S."/>
            <person name="Taylor M.S."/>
            <person name="Tegner J."/>
            <person name="Teichmann S.A."/>
            <person name="Ueda H.R."/>
            <person name="van Nimwegen E."/>
            <person name="Verardo R."/>
            <person name="Wei C.L."/>
            <person name="Yagi K."/>
            <person name="Yamanishi H."/>
            <person name="Zabarovsky E."/>
            <person name="Zhu S."/>
            <person name="Zimmer A."/>
            <person name="Hide W."/>
            <person name="Bult C."/>
            <person name="Grimmond S.M."/>
            <person name="Teasdale R.D."/>
            <person name="Liu E.T."/>
            <person name="Brusic V."/>
            <person name="Quackenbush J."/>
            <person name="Wahlestedt C."/>
            <person name="Mattick J.S."/>
            <person name="Hume D.A."/>
            <person name="Kai C."/>
            <person name="Sasaki D."/>
            <person name="Tomaru Y."/>
            <person name="Fukuda S."/>
            <person name="Kanamori-Katayama M."/>
            <person name="Suzuki M."/>
            <person name="Aoki J."/>
            <person name="Arakawa T."/>
            <person name="Iida J."/>
            <person name="Imamura K."/>
            <person name="Itoh M."/>
            <person name="Kato T."/>
            <person name="Kawaji H."/>
            <person name="Kawagashira N."/>
            <person name="Kawashima T."/>
            <person name="Kojima M."/>
            <person name="Kondo S."/>
            <person name="Konno H."/>
            <person name="Nakano K."/>
            <person name="Ninomiya N."/>
            <person name="Nishio T."/>
            <person name="Okada M."/>
            <person name="Plessy C."/>
            <person name="Shibata K."/>
            <person name="Shiraki T."/>
            <person name="Suzuki S."/>
            <person name="Tagami M."/>
            <person name="Waki K."/>
            <person name="Watahiki A."/>
            <person name="Okamura-Oho Y."/>
            <person name="Suzuki H."/>
            <person name="Kawai J."/>
            <person name="Hayashizaki Y."/>
        </authorList>
    </citation>
    <scope>NUCLEOTIDE SEQUENCE [LARGE SCALE MRNA]</scope>
    <source>
        <strain>C57BL/6J</strain>
        <tissue>Thymus</tissue>
    </source>
</reference>
<reference key="2">
    <citation type="journal article" date="2004" name="Genome Res.">
        <title>The status, quality, and expansion of the NIH full-length cDNA project: the Mammalian Gene Collection (MGC).</title>
        <authorList>
            <consortium name="The MGC Project Team"/>
        </authorList>
    </citation>
    <scope>NUCLEOTIDE SEQUENCE [LARGE SCALE MRNA]</scope>
    <source>
        <strain>FVB/N</strain>
        <tissue>Mammary tumor</tissue>
    </source>
</reference>
<reference key="3">
    <citation type="journal article" date="1990" name="Genomics">
        <title>Linkage and sequence conservation of the X-linked genes DXS253E (P3) and DXS254E (GdX) in mouse and man.</title>
        <authorList>
            <person name="Filippi M."/>
            <person name="Tribioli C."/>
            <person name="Toniolo D."/>
        </authorList>
    </citation>
    <scope>NUCLEOTIDE SEQUENCE [GENOMIC DNA] OF 292-473</scope>
    <source>
        <strain>BALB/cJ</strain>
        <tissue>Liver</tissue>
    </source>
</reference>
<evidence type="ECO:0000255" key="1"/>
<evidence type="ECO:0000305" key="2"/>
<dbReference type="EMBL" id="AK041958">
    <property type="protein sequence ID" value="BAC31110.1"/>
    <property type="molecule type" value="mRNA"/>
</dbReference>
<dbReference type="EMBL" id="BC023050">
    <property type="protein sequence ID" value="AAH23050.1"/>
    <property type="molecule type" value="mRNA"/>
</dbReference>
<dbReference type="EMBL" id="BC027440">
    <property type="protein sequence ID" value="AAH27440.1"/>
    <property type="molecule type" value="mRNA"/>
</dbReference>
<dbReference type="EMBL" id="J04761">
    <property type="protein sequence ID" value="AAA40519.1"/>
    <property type="molecule type" value="Genomic_DNA"/>
</dbReference>
<dbReference type="CCDS" id="CCDS30231.1"/>
<dbReference type="PIR" id="I54222">
    <property type="entry name" value="I54222"/>
</dbReference>
<dbReference type="RefSeq" id="NP_001243033.1">
    <property type="nucleotide sequence ID" value="NM_001256104.1"/>
</dbReference>
<dbReference type="RefSeq" id="NP_663381.1">
    <property type="nucleotide sequence ID" value="NM_145406.2"/>
</dbReference>
<dbReference type="SMR" id="P21129"/>
<dbReference type="BioGRID" id="229547">
    <property type="interactions" value="1"/>
</dbReference>
<dbReference type="FunCoup" id="P21129">
    <property type="interactions" value="31"/>
</dbReference>
<dbReference type="STRING" id="10090.ENSMUSP00000045150"/>
<dbReference type="PhosphoSitePlus" id="P21129"/>
<dbReference type="PaxDb" id="10090-ENSMUSP00000045150"/>
<dbReference type="Antibodypedia" id="17715">
    <property type="antibodies" value="61 antibodies from 16 providers"/>
</dbReference>
<dbReference type="DNASU" id="214601"/>
<dbReference type="Ensembl" id="ENSMUST00000037967.6">
    <property type="protein sequence ID" value="ENSMUSP00000045150.6"/>
    <property type="gene ID" value="ENSMUSG00000032806.14"/>
</dbReference>
<dbReference type="Ensembl" id="ENSMUST00000073067.11">
    <property type="protein sequence ID" value="ENSMUSP00000072818.5"/>
    <property type="gene ID" value="ENSMUSG00000032806.14"/>
</dbReference>
<dbReference type="Ensembl" id="ENSMUST00000114146.8">
    <property type="protein sequence ID" value="ENSMUSP00000109783.2"/>
    <property type="gene ID" value="ENSMUSG00000032806.14"/>
</dbReference>
<dbReference type="GeneID" id="214601"/>
<dbReference type="KEGG" id="mmu:214601"/>
<dbReference type="UCSC" id="uc009tou.2">
    <property type="organism name" value="mouse"/>
</dbReference>
<dbReference type="AGR" id="MGI:95048"/>
<dbReference type="CTD" id="8273"/>
<dbReference type="MGI" id="MGI:95048">
    <property type="gene designation" value="Slc10a3"/>
</dbReference>
<dbReference type="VEuPathDB" id="HostDB:ENSMUSG00000032806"/>
<dbReference type="eggNOG" id="KOG2718">
    <property type="taxonomic scope" value="Eukaryota"/>
</dbReference>
<dbReference type="GeneTree" id="ENSGT00950000182808"/>
<dbReference type="InParanoid" id="P21129"/>
<dbReference type="OMA" id="IQLMDPH"/>
<dbReference type="OrthoDB" id="203097at2759"/>
<dbReference type="PhylomeDB" id="P21129"/>
<dbReference type="TreeFam" id="TF315811"/>
<dbReference type="BioGRID-ORCS" id="214601">
    <property type="hits" value="1 hit in 79 CRISPR screens"/>
</dbReference>
<dbReference type="PRO" id="PR:P21129"/>
<dbReference type="Proteomes" id="UP000000589">
    <property type="component" value="Chromosome X"/>
</dbReference>
<dbReference type="RNAct" id="P21129">
    <property type="molecule type" value="protein"/>
</dbReference>
<dbReference type="Bgee" id="ENSMUSG00000032806">
    <property type="expression patterns" value="Expressed in decidua and 244 other cell types or tissues"/>
</dbReference>
<dbReference type="ExpressionAtlas" id="P21129">
    <property type="expression patterns" value="baseline and differential"/>
</dbReference>
<dbReference type="GO" id="GO:0016020">
    <property type="term" value="C:membrane"/>
    <property type="evidence" value="ECO:0007669"/>
    <property type="project" value="UniProtKB-SubCell"/>
</dbReference>
<dbReference type="GO" id="GO:0015293">
    <property type="term" value="F:symporter activity"/>
    <property type="evidence" value="ECO:0007669"/>
    <property type="project" value="UniProtKB-KW"/>
</dbReference>
<dbReference type="GO" id="GO:0032526">
    <property type="term" value="P:response to retinoic acid"/>
    <property type="evidence" value="ECO:0000314"/>
    <property type="project" value="MGI"/>
</dbReference>
<dbReference type="Gene3D" id="1.20.1530.20">
    <property type="match status" value="1"/>
</dbReference>
<dbReference type="InterPro" id="IPR002657">
    <property type="entry name" value="BilAc:Na_symport/Acr3"/>
</dbReference>
<dbReference type="InterPro" id="IPR004710">
    <property type="entry name" value="Bilac:Na_transpt"/>
</dbReference>
<dbReference type="InterPro" id="IPR038770">
    <property type="entry name" value="Na+/solute_symporter_sf"/>
</dbReference>
<dbReference type="PANTHER" id="PTHR10361:SF3">
    <property type="entry name" value="P3 PROTEIN"/>
    <property type="match status" value="1"/>
</dbReference>
<dbReference type="PANTHER" id="PTHR10361">
    <property type="entry name" value="SODIUM-BILE ACID COTRANSPORTER"/>
    <property type="match status" value="1"/>
</dbReference>
<dbReference type="Pfam" id="PF24690">
    <property type="entry name" value="NTCP5_P3_N"/>
    <property type="match status" value="1"/>
</dbReference>
<dbReference type="Pfam" id="PF01758">
    <property type="entry name" value="SBF"/>
    <property type="match status" value="1"/>
</dbReference>